<proteinExistence type="evidence at transcript level"/>
<name>GSTUB_ARATH</name>
<comment type="function">
    <text evidence="1">May be involved in the conjugation of reduced glutathione to a wide number of exogenous and endogenous hydrophobic electrophiles and have a detoxification role against certain herbicides.</text>
</comment>
<comment type="catalytic activity">
    <reaction>
        <text>RX + glutathione = an S-substituted glutathione + a halide anion + H(+)</text>
        <dbReference type="Rhea" id="RHEA:16437"/>
        <dbReference type="ChEBI" id="CHEBI:15378"/>
        <dbReference type="ChEBI" id="CHEBI:16042"/>
        <dbReference type="ChEBI" id="CHEBI:17792"/>
        <dbReference type="ChEBI" id="CHEBI:57925"/>
        <dbReference type="ChEBI" id="CHEBI:90779"/>
        <dbReference type="EC" id="2.5.1.18"/>
    </reaction>
</comment>
<comment type="subcellular location">
    <subcellularLocation>
        <location evidence="3">Cytoplasm</location>
        <location evidence="3">Cytosol</location>
    </subcellularLocation>
</comment>
<comment type="induction">
    <text evidence="2">By fungal elicitor.</text>
</comment>
<comment type="similarity">
    <text evidence="3">Belongs to the GST superfamily. Tau family.</text>
</comment>
<feature type="chain" id="PRO_0000413557" description="Glutathione S-transferase U11">
    <location>
        <begin position="1"/>
        <end position="234"/>
    </location>
</feature>
<feature type="domain" description="GST N-terminal">
    <location>
        <begin position="11"/>
        <end position="90"/>
    </location>
</feature>
<feature type="domain" description="GST C-terminal">
    <location>
        <begin position="96"/>
        <end position="228"/>
    </location>
</feature>
<feature type="binding site" evidence="1">
    <location>
        <begin position="21"/>
        <end position="22"/>
    </location>
    <ligand>
        <name>glutathione</name>
        <dbReference type="ChEBI" id="CHEBI:57925"/>
    </ligand>
</feature>
<feature type="binding site" evidence="1">
    <location>
        <begin position="47"/>
        <end position="48"/>
    </location>
    <ligand>
        <name>glutathione</name>
        <dbReference type="ChEBI" id="CHEBI:57925"/>
    </ligand>
</feature>
<feature type="binding site" evidence="1">
    <location>
        <begin position="61"/>
        <end position="62"/>
    </location>
    <ligand>
        <name>glutathione</name>
        <dbReference type="ChEBI" id="CHEBI:57925"/>
    </ligand>
</feature>
<feature type="binding site" evidence="1">
    <location>
        <begin position="74"/>
        <end position="75"/>
    </location>
    <ligand>
        <name>glutathione</name>
        <dbReference type="ChEBI" id="CHEBI:57925"/>
    </ligand>
</feature>
<reference key="1">
    <citation type="journal article" date="2000" name="Nature">
        <title>Sequence and analysis of chromosome 1 of the plant Arabidopsis thaliana.</title>
        <authorList>
            <person name="Theologis A."/>
            <person name="Ecker J.R."/>
            <person name="Palm C.J."/>
            <person name="Federspiel N.A."/>
            <person name="Kaul S."/>
            <person name="White O."/>
            <person name="Alonso J."/>
            <person name="Altafi H."/>
            <person name="Araujo R."/>
            <person name="Bowman C.L."/>
            <person name="Brooks S.Y."/>
            <person name="Buehler E."/>
            <person name="Chan A."/>
            <person name="Chao Q."/>
            <person name="Chen H."/>
            <person name="Cheuk R.F."/>
            <person name="Chin C.W."/>
            <person name="Chung M.K."/>
            <person name="Conn L."/>
            <person name="Conway A.B."/>
            <person name="Conway A.R."/>
            <person name="Creasy T.H."/>
            <person name="Dewar K."/>
            <person name="Dunn P."/>
            <person name="Etgu P."/>
            <person name="Feldblyum T.V."/>
            <person name="Feng J.-D."/>
            <person name="Fong B."/>
            <person name="Fujii C.Y."/>
            <person name="Gill J.E."/>
            <person name="Goldsmith A.D."/>
            <person name="Haas B."/>
            <person name="Hansen N.F."/>
            <person name="Hughes B."/>
            <person name="Huizar L."/>
            <person name="Hunter J.L."/>
            <person name="Jenkins J."/>
            <person name="Johnson-Hopson C."/>
            <person name="Khan S."/>
            <person name="Khaykin E."/>
            <person name="Kim C.J."/>
            <person name="Koo H.L."/>
            <person name="Kremenetskaia I."/>
            <person name="Kurtz D.B."/>
            <person name="Kwan A."/>
            <person name="Lam B."/>
            <person name="Langin-Hooper S."/>
            <person name="Lee A."/>
            <person name="Lee J.M."/>
            <person name="Lenz C.A."/>
            <person name="Li J.H."/>
            <person name="Li Y.-P."/>
            <person name="Lin X."/>
            <person name="Liu S.X."/>
            <person name="Liu Z.A."/>
            <person name="Luros J.S."/>
            <person name="Maiti R."/>
            <person name="Marziali A."/>
            <person name="Militscher J."/>
            <person name="Miranda M."/>
            <person name="Nguyen M."/>
            <person name="Nierman W.C."/>
            <person name="Osborne B.I."/>
            <person name="Pai G."/>
            <person name="Peterson J."/>
            <person name="Pham P.K."/>
            <person name="Rizzo M."/>
            <person name="Rooney T."/>
            <person name="Rowley D."/>
            <person name="Sakano H."/>
            <person name="Salzberg S.L."/>
            <person name="Schwartz J.R."/>
            <person name="Shinn P."/>
            <person name="Southwick A.M."/>
            <person name="Sun H."/>
            <person name="Tallon L.J."/>
            <person name="Tambunga G."/>
            <person name="Toriumi M.J."/>
            <person name="Town C.D."/>
            <person name="Utterback T."/>
            <person name="Van Aken S."/>
            <person name="Vaysberg M."/>
            <person name="Vysotskaia V.S."/>
            <person name="Walker M."/>
            <person name="Wu D."/>
            <person name="Yu G."/>
            <person name="Fraser C.M."/>
            <person name="Venter J.C."/>
            <person name="Davis R.W."/>
        </authorList>
    </citation>
    <scope>NUCLEOTIDE SEQUENCE [LARGE SCALE GENOMIC DNA]</scope>
    <source>
        <strain>cv. Columbia</strain>
    </source>
</reference>
<reference key="2">
    <citation type="journal article" date="2017" name="Plant J.">
        <title>Araport11: a complete reannotation of the Arabidopsis thaliana reference genome.</title>
        <authorList>
            <person name="Cheng C.Y."/>
            <person name="Krishnakumar V."/>
            <person name="Chan A.P."/>
            <person name="Thibaud-Nissen F."/>
            <person name="Schobel S."/>
            <person name="Town C.D."/>
        </authorList>
    </citation>
    <scope>GENOME REANNOTATION</scope>
    <source>
        <strain>cv. Columbia</strain>
    </source>
</reference>
<reference key="3">
    <citation type="journal article" date="2002" name="Science">
        <title>Functional annotation of a full-length Arabidopsis cDNA collection.</title>
        <authorList>
            <person name="Seki M."/>
            <person name="Narusaka M."/>
            <person name="Kamiya A."/>
            <person name="Ishida J."/>
            <person name="Satou M."/>
            <person name="Sakurai T."/>
            <person name="Nakajima M."/>
            <person name="Enju A."/>
            <person name="Akiyama K."/>
            <person name="Oono Y."/>
            <person name="Muramatsu M."/>
            <person name="Hayashizaki Y."/>
            <person name="Kawai J."/>
            <person name="Carninci P."/>
            <person name="Itoh M."/>
            <person name="Ishii Y."/>
            <person name="Arakawa T."/>
            <person name="Shibata K."/>
            <person name="Shinagawa A."/>
            <person name="Shinozaki K."/>
        </authorList>
    </citation>
    <scope>NUCLEOTIDE SEQUENCE [LARGE SCALE MRNA]</scope>
    <source>
        <strain>cv. Columbia</strain>
    </source>
</reference>
<reference key="4">
    <citation type="journal article" date="2003" name="Science">
        <title>Empirical analysis of transcriptional activity in the Arabidopsis genome.</title>
        <authorList>
            <person name="Yamada K."/>
            <person name="Lim J."/>
            <person name="Dale J.M."/>
            <person name="Chen H."/>
            <person name="Shinn P."/>
            <person name="Palm C.J."/>
            <person name="Southwick A.M."/>
            <person name="Wu H.C."/>
            <person name="Kim C.J."/>
            <person name="Nguyen M."/>
            <person name="Pham P.K."/>
            <person name="Cheuk R.F."/>
            <person name="Karlin-Newmann G."/>
            <person name="Liu S.X."/>
            <person name="Lam B."/>
            <person name="Sakano H."/>
            <person name="Wu T."/>
            <person name="Yu G."/>
            <person name="Miranda M."/>
            <person name="Quach H.L."/>
            <person name="Tripp M."/>
            <person name="Chang C.H."/>
            <person name="Lee J.M."/>
            <person name="Toriumi M.J."/>
            <person name="Chan M.M."/>
            <person name="Tang C.C."/>
            <person name="Onodera C.S."/>
            <person name="Deng J.M."/>
            <person name="Akiyama K."/>
            <person name="Ansari Y."/>
            <person name="Arakawa T."/>
            <person name="Banh J."/>
            <person name="Banno F."/>
            <person name="Bowser L."/>
            <person name="Brooks S.Y."/>
            <person name="Carninci P."/>
            <person name="Chao Q."/>
            <person name="Choy N."/>
            <person name="Enju A."/>
            <person name="Goldsmith A.D."/>
            <person name="Gurjal M."/>
            <person name="Hansen N.F."/>
            <person name="Hayashizaki Y."/>
            <person name="Johnson-Hopson C."/>
            <person name="Hsuan V.W."/>
            <person name="Iida K."/>
            <person name="Karnes M."/>
            <person name="Khan S."/>
            <person name="Koesema E."/>
            <person name="Ishida J."/>
            <person name="Jiang P.X."/>
            <person name="Jones T."/>
            <person name="Kawai J."/>
            <person name="Kamiya A."/>
            <person name="Meyers C."/>
            <person name="Nakajima M."/>
            <person name="Narusaka M."/>
            <person name="Seki M."/>
            <person name="Sakurai T."/>
            <person name="Satou M."/>
            <person name="Tamse R."/>
            <person name="Vaysberg M."/>
            <person name="Wallender E.K."/>
            <person name="Wong C."/>
            <person name="Yamamura Y."/>
            <person name="Yuan S."/>
            <person name="Shinozaki K."/>
            <person name="Davis R.W."/>
            <person name="Theologis A."/>
            <person name="Ecker J.R."/>
        </authorList>
    </citation>
    <scope>NUCLEOTIDE SEQUENCE [LARGE SCALE MRNA]</scope>
    <source>
        <strain>cv. Columbia</strain>
    </source>
</reference>
<reference key="5">
    <citation type="journal article" date="2002" name="Plant Mol. Biol.">
        <title>Probing the diversity of the Arabidopsis glutathione S-transferase gene family.</title>
        <authorList>
            <person name="Wagner U."/>
            <person name="Edwards R."/>
            <person name="Dixon D.P."/>
            <person name="Mauch F."/>
        </authorList>
    </citation>
    <scope>GENE FAMILY</scope>
    <scope>NOMENCLATURE</scope>
</reference>
<reference key="6">
    <citation type="journal article" date="2006" name="Plant Physiol.">
        <title>Necrosis- and ethylene-inducing peptide from Fusarium oxysporum induces a complex cascade of transcripts associated with signal transduction and cell death in Arabidopsis.</title>
        <authorList>
            <person name="Bae H."/>
            <person name="Kim M.S."/>
            <person name="Sicher R.C."/>
            <person name="Bae H.J."/>
            <person name="Bailey B.A."/>
        </authorList>
    </citation>
    <scope>INDUCTION</scope>
</reference>
<accession>Q9CAS6</accession>
<dbReference type="EC" id="2.5.1.18"/>
<dbReference type="EMBL" id="AC010675">
    <property type="protein sequence ID" value="AAG52568.1"/>
    <property type="molecule type" value="Genomic_DNA"/>
</dbReference>
<dbReference type="EMBL" id="CP002684">
    <property type="protein sequence ID" value="AEE34999.1"/>
    <property type="molecule type" value="Genomic_DNA"/>
</dbReference>
<dbReference type="EMBL" id="AK119143">
    <property type="protein sequence ID" value="BAC43713.1"/>
    <property type="molecule type" value="mRNA"/>
</dbReference>
<dbReference type="EMBL" id="BT006220">
    <property type="protein sequence ID" value="AAP12869.1"/>
    <property type="molecule type" value="mRNA"/>
</dbReference>
<dbReference type="PIR" id="G96721">
    <property type="entry name" value="G96721"/>
</dbReference>
<dbReference type="RefSeq" id="NP_177151.1">
    <property type="nucleotide sequence ID" value="NM_105661.5"/>
</dbReference>
<dbReference type="SMR" id="Q9CAS6"/>
<dbReference type="BioGRID" id="28550">
    <property type="interactions" value="1"/>
</dbReference>
<dbReference type="FunCoup" id="Q9CAS6">
    <property type="interactions" value="143"/>
</dbReference>
<dbReference type="IntAct" id="Q9CAS6">
    <property type="interactions" value="1"/>
</dbReference>
<dbReference type="STRING" id="3702.Q9CAS6"/>
<dbReference type="iPTMnet" id="Q9CAS6"/>
<dbReference type="PaxDb" id="3702-AT1G69930.1"/>
<dbReference type="ProteomicsDB" id="247195"/>
<dbReference type="EnsemblPlants" id="AT1G69930.1">
    <property type="protein sequence ID" value="AT1G69930.1"/>
    <property type="gene ID" value="AT1G69930"/>
</dbReference>
<dbReference type="GeneID" id="843329"/>
<dbReference type="Gramene" id="AT1G69930.1">
    <property type="protein sequence ID" value="AT1G69930.1"/>
    <property type="gene ID" value="AT1G69930"/>
</dbReference>
<dbReference type="KEGG" id="ath:AT1G69930"/>
<dbReference type="Araport" id="AT1G69930"/>
<dbReference type="TAIR" id="AT1G69930">
    <property type="gene designation" value="GSTU11"/>
</dbReference>
<dbReference type="eggNOG" id="KOG0406">
    <property type="taxonomic scope" value="Eukaryota"/>
</dbReference>
<dbReference type="HOGENOM" id="CLU_011226_18_0_1"/>
<dbReference type="InParanoid" id="Q9CAS6"/>
<dbReference type="OMA" id="FIHSENT"/>
<dbReference type="OrthoDB" id="4951845at2759"/>
<dbReference type="PhylomeDB" id="Q9CAS6"/>
<dbReference type="BioCyc" id="ARA:AT1G69930-MONOMER"/>
<dbReference type="PRO" id="PR:Q9CAS6"/>
<dbReference type="Proteomes" id="UP000006548">
    <property type="component" value="Chromosome 1"/>
</dbReference>
<dbReference type="ExpressionAtlas" id="Q9CAS6">
    <property type="expression patterns" value="baseline and differential"/>
</dbReference>
<dbReference type="GO" id="GO:0005737">
    <property type="term" value="C:cytoplasm"/>
    <property type="evidence" value="ECO:0000303"/>
    <property type="project" value="TAIR"/>
</dbReference>
<dbReference type="GO" id="GO:0005829">
    <property type="term" value="C:cytosol"/>
    <property type="evidence" value="ECO:0007669"/>
    <property type="project" value="UniProtKB-SubCell"/>
</dbReference>
<dbReference type="GO" id="GO:0004364">
    <property type="term" value="F:glutathione transferase activity"/>
    <property type="evidence" value="ECO:0007669"/>
    <property type="project" value="UniProtKB-EC"/>
</dbReference>
<dbReference type="GO" id="GO:0006749">
    <property type="term" value="P:glutathione metabolic process"/>
    <property type="evidence" value="ECO:0007669"/>
    <property type="project" value="InterPro"/>
</dbReference>
<dbReference type="GO" id="GO:0009407">
    <property type="term" value="P:toxin catabolic process"/>
    <property type="evidence" value="ECO:0000304"/>
    <property type="project" value="TAIR"/>
</dbReference>
<dbReference type="CDD" id="cd03185">
    <property type="entry name" value="GST_C_Tau"/>
    <property type="match status" value="1"/>
</dbReference>
<dbReference type="CDD" id="cd03058">
    <property type="entry name" value="GST_N_Tau"/>
    <property type="match status" value="1"/>
</dbReference>
<dbReference type="FunFam" id="3.40.30.10:FF:000256">
    <property type="entry name" value="Glutathione S-transferase U11"/>
    <property type="match status" value="1"/>
</dbReference>
<dbReference type="FunFam" id="1.20.1050.10:FF:000016">
    <property type="entry name" value="Glutathione S-transferase U9"/>
    <property type="match status" value="1"/>
</dbReference>
<dbReference type="Gene3D" id="1.20.1050.10">
    <property type="match status" value="1"/>
</dbReference>
<dbReference type="Gene3D" id="3.40.30.10">
    <property type="entry name" value="Glutaredoxin"/>
    <property type="match status" value="1"/>
</dbReference>
<dbReference type="InterPro" id="IPR010987">
    <property type="entry name" value="Glutathione-S-Trfase_C-like"/>
</dbReference>
<dbReference type="InterPro" id="IPR036282">
    <property type="entry name" value="Glutathione-S-Trfase_C_sf"/>
</dbReference>
<dbReference type="InterPro" id="IPR040079">
    <property type="entry name" value="Glutathione_S-Trfase"/>
</dbReference>
<dbReference type="InterPro" id="IPR004045">
    <property type="entry name" value="Glutathione_S-Trfase_N"/>
</dbReference>
<dbReference type="InterPro" id="IPR045074">
    <property type="entry name" value="GST_C_Tau"/>
</dbReference>
<dbReference type="InterPro" id="IPR045073">
    <property type="entry name" value="Omega/Tau-like"/>
</dbReference>
<dbReference type="InterPro" id="IPR036249">
    <property type="entry name" value="Thioredoxin-like_sf"/>
</dbReference>
<dbReference type="PANTHER" id="PTHR11260:SF621">
    <property type="entry name" value="GLUTATHIONE S-TRANSFERASE U11"/>
    <property type="match status" value="1"/>
</dbReference>
<dbReference type="PANTHER" id="PTHR11260">
    <property type="entry name" value="GLUTATHIONE S-TRANSFERASE, GST, SUPERFAMILY, GST DOMAIN CONTAINING"/>
    <property type="match status" value="1"/>
</dbReference>
<dbReference type="Pfam" id="PF02798">
    <property type="entry name" value="GST_N"/>
    <property type="match status" value="1"/>
</dbReference>
<dbReference type="SFLD" id="SFLDS00019">
    <property type="entry name" value="Glutathione_Transferase_(cytos"/>
    <property type="match status" value="1"/>
</dbReference>
<dbReference type="SFLD" id="SFLDG01152">
    <property type="entry name" value="Main.3:_Omega-_and_Tau-like"/>
    <property type="match status" value="1"/>
</dbReference>
<dbReference type="SUPFAM" id="SSF47616">
    <property type="entry name" value="GST C-terminal domain-like"/>
    <property type="match status" value="1"/>
</dbReference>
<dbReference type="SUPFAM" id="SSF52833">
    <property type="entry name" value="Thioredoxin-like"/>
    <property type="match status" value="1"/>
</dbReference>
<dbReference type="PROSITE" id="PS50405">
    <property type="entry name" value="GST_CTER"/>
    <property type="match status" value="1"/>
</dbReference>
<dbReference type="PROSITE" id="PS50404">
    <property type="entry name" value="GST_NTER"/>
    <property type="match status" value="1"/>
</dbReference>
<keyword id="KW-0963">Cytoplasm</keyword>
<keyword id="KW-0216">Detoxification</keyword>
<keyword id="KW-1185">Reference proteome</keyword>
<keyword id="KW-0346">Stress response</keyword>
<keyword id="KW-0808">Transferase</keyword>
<evidence type="ECO:0000250" key="1"/>
<evidence type="ECO:0000269" key="2">
    <source>
    </source>
</evidence>
<evidence type="ECO:0000305" key="3"/>
<protein>
    <recommendedName>
        <fullName>Glutathione S-transferase U11</fullName>
        <shortName>AtGSTU11</shortName>
        <ecNumber>2.5.1.18</ecNumber>
    </recommendedName>
    <alternativeName>
        <fullName>GST class-tau member 11</fullName>
    </alternativeName>
</protein>
<gene>
    <name type="primary">GSTU11</name>
    <name type="ordered locus">At1g69930</name>
    <name type="ORF">T17F3.4</name>
</gene>
<sequence length="234" mass="26516">MGLMNRSKNDEYVKLLGAWPSPFVLRTRIALNLKNVAYEYLEEEDTLSSESVLNYNPVHKQIPILIHGNKPIRESLNIVMYVDETWLSGPPILPSDPFDRAVARFWDVYIDEHCFTSINGVAVAKGEENINAAIAKLEQCMALLEETFQECSKGRGFFGGENIGFIDIGFGSMLGPLTVLEKFTGVKFIHPENTPGLFHWADRFYAHEAVKPVMPDIEKLVQFARLKFNTSIFK</sequence>
<organism>
    <name type="scientific">Arabidopsis thaliana</name>
    <name type="common">Mouse-ear cress</name>
    <dbReference type="NCBI Taxonomy" id="3702"/>
    <lineage>
        <taxon>Eukaryota</taxon>
        <taxon>Viridiplantae</taxon>
        <taxon>Streptophyta</taxon>
        <taxon>Embryophyta</taxon>
        <taxon>Tracheophyta</taxon>
        <taxon>Spermatophyta</taxon>
        <taxon>Magnoliopsida</taxon>
        <taxon>eudicotyledons</taxon>
        <taxon>Gunneridae</taxon>
        <taxon>Pentapetalae</taxon>
        <taxon>rosids</taxon>
        <taxon>malvids</taxon>
        <taxon>Brassicales</taxon>
        <taxon>Brassicaceae</taxon>
        <taxon>Camelineae</taxon>
        <taxon>Arabidopsis</taxon>
    </lineage>
</organism>